<accession>P58048</accession>
<accession>F4K1E1</accession>
<organism>
    <name type="scientific">Arabidopsis thaliana</name>
    <name type="common">Mouse-ear cress</name>
    <dbReference type="NCBI Taxonomy" id="3702"/>
    <lineage>
        <taxon>Eukaryota</taxon>
        <taxon>Viridiplantae</taxon>
        <taxon>Streptophyta</taxon>
        <taxon>Embryophyta</taxon>
        <taxon>Tracheophyta</taxon>
        <taxon>Spermatophyta</taxon>
        <taxon>Magnoliopsida</taxon>
        <taxon>eudicotyledons</taxon>
        <taxon>Gunneridae</taxon>
        <taxon>Pentapetalae</taxon>
        <taxon>rosids</taxon>
        <taxon>malvids</taxon>
        <taxon>Brassicales</taxon>
        <taxon>Brassicaceae</taxon>
        <taxon>Camelineae</taxon>
        <taxon>Arabidopsis</taxon>
    </lineage>
</organism>
<dbReference type="EC" id="1.14.-.-"/>
<dbReference type="EMBL" id="AB011485">
    <property type="status" value="NOT_ANNOTATED_CDS"/>
    <property type="molecule type" value="Genomic_DNA"/>
</dbReference>
<dbReference type="EMBL" id="CP002688">
    <property type="protein sequence ID" value="AED94008.1"/>
    <property type="status" value="ALT_SEQ"/>
    <property type="molecule type" value="Genomic_DNA"/>
</dbReference>
<dbReference type="RefSeq" id="NP_680342.2">
    <property type="nucleotide sequence ID" value="NM_148037.2"/>
</dbReference>
<dbReference type="SMR" id="P58048"/>
<dbReference type="BioGRID" id="18799">
    <property type="interactions" value="1"/>
</dbReference>
<dbReference type="FunCoup" id="P58048">
    <property type="interactions" value="220"/>
</dbReference>
<dbReference type="IntAct" id="P58048">
    <property type="interactions" value="1"/>
</dbReference>
<dbReference type="STRING" id="3702.P58048"/>
<dbReference type="PaxDb" id="3702-AT5G35715.1"/>
<dbReference type="PeptideAtlas" id="P58048"/>
<dbReference type="ProteomicsDB" id="240389"/>
<dbReference type="GeneID" id="833546"/>
<dbReference type="KEGG" id="ath:AT5G35715"/>
<dbReference type="Araport" id="AT5G35715"/>
<dbReference type="TAIR" id="AT5G35715"/>
<dbReference type="eggNOG" id="KOG0156">
    <property type="taxonomic scope" value="Eukaryota"/>
</dbReference>
<dbReference type="HOGENOM" id="CLU_001570_4_1_1"/>
<dbReference type="InParanoid" id="P58048"/>
<dbReference type="PhylomeDB" id="P58048"/>
<dbReference type="BioCyc" id="ARA:AT5G35715-MONOMER"/>
<dbReference type="PRO" id="PR:P58048"/>
<dbReference type="Proteomes" id="UP000006548">
    <property type="component" value="Chromosome 5"/>
</dbReference>
<dbReference type="ExpressionAtlas" id="P58048">
    <property type="expression patterns" value="baseline"/>
</dbReference>
<dbReference type="GO" id="GO:0016020">
    <property type="term" value="C:membrane"/>
    <property type="evidence" value="ECO:0007669"/>
    <property type="project" value="UniProtKB-SubCell"/>
</dbReference>
<dbReference type="GO" id="GO:0020037">
    <property type="term" value="F:heme binding"/>
    <property type="evidence" value="ECO:0007669"/>
    <property type="project" value="InterPro"/>
</dbReference>
<dbReference type="GO" id="GO:0005506">
    <property type="term" value="F:iron ion binding"/>
    <property type="evidence" value="ECO:0007669"/>
    <property type="project" value="InterPro"/>
</dbReference>
<dbReference type="GO" id="GO:0004497">
    <property type="term" value="F:monooxygenase activity"/>
    <property type="evidence" value="ECO:0007669"/>
    <property type="project" value="UniProtKB-KW"/>
</dbReference>
<dbReference type="GO" id="GO:0016705">
    <property type="term" value="F:oxidoreductase activity, acting on paired donors, with incorporation or reduction of molecular oxygen"/>
    <property type="evidence" value="ECO:0007669"/>
    <property type="project" value="InterPro"/>
</dbReference>
<dbReference type="CDD" id="cd11072">
    <property type="entry name" value="CYP71-like"/>
    <property type="match status" value="1"/>
</dbReference>
<dbReference type="FunFam" id="1.10.630.10:FF:000011">
    <property type="entry name" value="Cytochrome P450 83B1"/>
    <property type="match status" value="1"/>
</dbReference>
<dbReference type="Gene3D" id="1.10.630.10">
    <property type="entry name" value="Cytochrome P450"/>
    <property type="match status" value="1"/>
</dbReference>
<dbReference type="InterPro" id="IPR001128">
    <property type="entry name" value="Cyt_P450"/>
</dbReference>
<dbReference type="InterPro" id="IPR017972">
    <property type="entry name" value="Cyt_P450_CS"/>
</dbReference>
<dbReference type="InterPro" id="IPR002401">
    <property type="entry name" value="Cyt_P450_E_grp-I"/>
</dbReference>
<dbReference type="InterPro" id="IPR036396">
    <property type="entry name" value="Cyt_P450_sf"/>
</dbReference>
<dbReference type="InterPro" id="IPR050193">
    <property type="entry name" value="Cytochrome_P450_71"/>
</dbReference>
<dbReference type="PANTHER" id="PTHR47956">
    <property type="entry name" value="CYTOCHROME P450 71B11-RELATED"/>
    <property type="match status" value="1"/>
</dbReference>
<dbReference type="PANTHER" id="PTHR47956:SF79">
    <property type="entry name" value="CYTOCHROME P450 71B31-RELATED"/>
    <property type="match status" value="1"/>
</dbReference>
<dbReference type="Pfam" id="PF00067">
    <property type="entry name" value="p450"/>
    <property type="match status" value="1"/>
</dbReference>
<dbReference type="PRINTS" id="PR00463">
    <property type="entry name" value="EP450I"/>
</dbReference>
<dbReference type="PRINTS" id="PR00385">
    <property type="entry name" value="P450"/>
</dbReference>
<dbReference type="SUPFAM" id="SSF48264">
    <property type="entry name" value="Cytochrome P450"/>
    <property type="match status" value="1"/>
</dbReference>
<dbReference type="PROSITE" id="PS00086">
    <property type="entry name" value="CYTOCHROME_P450"/>
    <property type="match status" value="1"/>
</dbReference>
<comment type="cofactor">
    <cofactor evidence="1">
        <name>heme</name>
        <dbReference type="ChEBI" id="CHEBI:30413"/>
    </cofactor>
</comment>
<comment type="subcellular location">
    <subcellularLocation>
        <location evidence="3">Membrane</location>
        <topology evidence="3">Single-pass membrane protein</topology>
    </subcellularLocation>
</comment>
<comment type="similarity">
    <text evidence="3">Belongs to the cytochrome P450 family.</text>
</comment>
<comment type="sequence caution" evidence="3">
    <conflict type="frameshift">
        <sequence resource="EMBL" id="AB011485"/>
    </conflict>
</comment>
<comment type="sequence caution" evidence="3">
    <conflict type="erroneous initiation">
        <sequence resource="EMBL-CDS" id="AED94008"/>
    </conflict>
    <text>Truncated N-terminus.</text>
</comment>
<comment type="sequence caution" evidence="3">
    <conflict type="frameshift">
        <sequence resource="EMBL-CDS" id="AED94008"/>
    </conflict>
</comment>
<reference key="1">
    <citation type="journal article" date="1998" name="DNA Res.">
        <title>Structural analysis of Arabidopsis thaliana chromosome 5. V. Sequence features of the regions of 1,381,565 bp covered by twenty one physically assigned P1 and TAC clones.</title>
        <authorList>
            <person name="Kaneko T."/>
            <person name="Kotani H."/>
            <person name="Nakamura Y."/>
            <person name="Sato S."/>
            <person name="Asamizu E."/>
            <person name="Miyajima N."/>
            <person name="Tabata S."/>
        </authorList>
    </citation>
    <scope>NUCLEOTIDE SEQUENCE [LARGE SCALE GENOMIC DNA]</scope>
    <source>
        <strain>cv. Columbia</strain>
    </source>
</reference>
<reference key="2">
    <citation type="journal article" date="2017" name="Plant J.">
        <title>Araport11: a complete reannotation of the Arabidopsis thaliana reference genome.</title>
        <authorList>
            <person name="Cheng C.Y."/>
            <person name="Krishnakumar V."/>
            <person name="Chan A.P."/>
            <person name="Thibaud-Nissen F."/>
            <person name="Schobel S."/>
            <person name="Town C.D."/>
        </authorList>
    </citation>
    <scope>GENOME REANNOTATION</scope>
    <source>
        <strain>cv. Columbia</strain>
    </source>
</reference>
<sequence length="506" mass="57970">MIKSILLCFFFLFPLLLTLFKKLLPSKWKLPPGPTGLPIIGNLHQLGRLLHSSFHKLSLEHGPVMLLRFGVVPMVVISSKEAAKQVLKSRDLETCSRPKLVANGLFTRNFKDIAFAQYGEDWREMKKLVGLELFNPKKHKFFRYIREEEGDLLVKKLSKSSQTQTLVDLRKAFFSFTAGIIFRVSFGQNFRECDFIDMDRLEELVQESETNVFSFAFTDFFPTGLGWLVDRISGQHSRIEKAFSKLTKFFQHVIDEELKIGQSQDHSNLVSSMLDMINRSTEYGSFKITSDHLIAMMTDIVLGGVNAGTITMIWTMTELTRHPRVMKKLREEIRATLGPNKERITEEDLEKVEYLKLVIKETFRLHPPGPFLLPRQVMSDIEIQGYHIPKNAHIKISTYAIGRDPKCWTNPEEFNPERFANTSINYKGQHYELLPFGAGRRSCPGMTLGITILELGLLNILYYFDWSLPNGMTIKDIDMEEDGALTIAKKVPLELIPTLPASLCIK</sequence>
<gene>
    <name type="primary">CYP71B8</name>
    <name type="ordered locus">At5g35715</name>
    <name type="ORF">MXH1.7</name>
</gene>
<name>C71B8_ARATH</name>
<evidence type="ECO:0000250" key="1"/>
<evidence type="ECO:0000255" key="2"/>
<evidence type="ECO:0000305" key="3"/>
<feature type="chain" id="PRO_0000052086" description="Cytochrome P450 71B8">
    <location>
        <begin position="1"/>
        <end position="506"/>
    </location>
</feature>
<feature type="transmembrane region" description="Helical" evidence="2">
    <location>
        <begin position="5"/>
        <end position="25"/>
    </location>
</feature>
<feature type="binding site" description="axial binding residue" evidence="1">
    <location>
        <position position="443"/>
    </location>
    <ligand>
        <name>heme</name>
        <dbReference type="ChEBI" id="CHEBI:30413"/>
    </ligand>
    <ligandPart>
        <name>Fe</name>
        <dbReference type="ChEBI" id="CHEBI:18248"/>
    </ligandPart>
</feature>
<protein>
    <recommendedName>
        <fullName>Cytochrome P450 71B8</fullName>
        <ecNumber>1.14.-.-</ecNumber>
    </recommendedName>
    <alternativeName>
        <fullName>Cytochrome P450, family 71, subfamily B, polypeptide 8</fullName>
    </alternativeName>
</protein>
<proteinExistence type="inferred from homology"/>
<keyword id="KW-0349">Heme</keyword>
<keyword id="KW-0408">Iron</keyword>
<keyword id="KW-0472">Membrane</keyword>
<keyword id="KW-0479">Metal-binding</keyword>
<keyword id="KW-0503">Monooxygenase</keyword>
<keyword id="KW-0560">Oxidoreductase</keyword>
<keyword id="KW-1185">Reference proteome</keyword>
<keyword id="KW-0812">Transmembrane</keyword>
<keyword id="KW-1133">Transmembrane helix</keyword>